<evidence type="ECO:0000255" key="1">
    <source>
        <dbReference type="HAMAP-Rule" id="MF_00540"/>
    </source>
</evidence>
<feature type="chain" id="PRO_0000194372" description="Adenosine deaminase">
    <location>
        <begin position="1"/>
        <end position="352"/>
    </location>
</feature>
<feature type="active site" description="Proton donor" evidence="1">
    <location>
        <position position="211"/>
    </location>
</feature>
<feature type="binding site" evidence="1">
    <location>
        <position position="24"/>
    </location>
    <ligand>
        <name>Zn(2+)</name>
        <dbReference type="ChEBI" id="CHEBI:29105"/>
        <note>catalytic</note>
    </ligand>
</feature>
<feature type="binding site" evidence="1">
    <location>
        <position position="26"/>
    </location>
    <ligand>
        <name>substrate</name>
    </ligand>
</feature>
<feature type="binding site" evidence="1">
    <location>
        <position position="26"/>
    </location>
    <ligand>
        <name>Zn(2+)</name>
        <dbReference type="ChEBI" id="CHEBI:29105"/>
        <note>catalytic</note>
    </ligand>
</feature>
<feature type="binding site" evidence="1">
    <location>
        <position position="28"/>
    </location>
    <ligand>
        <name>substrate</name>
    </ligand>
</feature>
<feature type="binding site" evidence="1">
    <location>
        <position position="181"/>
    </location>
    <ligand>
        <name>substrate</name>
    </ligand>
</feature>
<feature type="binding site" evidence="1">
    <location>
        <position position="208"/>
    </location>
    <ligand>
        <name>Zn(2+)</name>
        <dbReference type="ChEBI" id="CHEBI:29105"/>
        <note>catalytic</note>
    </ligand>
</feature>
<feature type="binding site" evidence="1">
    <location>
        <position position="290"/>
    </location>
    <ligand>
        <name>Zn(2+)</name>
        <dbReference type="ChEBI" id="CHEBI:29105"/>
        <note>catalytic</note>
    </ligand>
</feature>
<feature type="site" description="Important for catalytic activity" evidence="1">
    <location>
        <position position="232"/>
    </location>
</feature>
<dbReference type="EC" id="3.5.4.4" evidence="1"/>
<dbReference type="EMBL" id="AE005176">
    <property type="protein sequence ID" value="AAK04385.1"/>
    <property type="molecule type" value="Genomic_DNA"/>
</dbReference>
<dbReference type="PIR" id="G86660">
    <property type="entry name" value="G86660"/>
</dbReference>
<dbReference type="RefSeq" id="NP_266443.1">
    <property type="nucleotide sequence ID" value="NC_002662.1"/>
</dbReference>
<dbReference type="RefSeq" id="WP_010905265.1">
    <property type="nucleotide sequence ID" value="NC_002662.1"/>
</dbReference>
<dbReference type="SMR" id="Q9CIR9"/>
<dbReference type="PaxDb" id="272623-L87453"/>
<dbReference type="EnsemblBacteria" id="AAK04385">
    <property type="protein sequence ID" value="AAK04385"/>
    <property type="gene ID" value="L87453"/>
</dbReference>
<dbReference type="KEGG" id="lla:L87453"/>
<dbReference type="PATRIC" id="fig|272623.7.peg.316"/>
<dbReference type="eggNOG" id="COG1816">
    <property type="taxonomic scope" value="Bacteria"/>
</dbReference>
<dbReference type="HOGENOM" id="CLU_039228_0_0_9"/>
<dbReference type="OrthoDB" id="9779574at2"/>
<dbReference type="Proteomes" id="UP000002196">
    <property type="component" value="Chromosome"/>
</dbReference>
<dbReference type="GO" id="GO:0005829">
    <property type="term" value="C:cytosol"/>
    <property type="evidence" value="ECO:0007669"/>
    <property type="project" value="TreeGrafter"/>
</dbReference>
<dbReference type="GO" id="GO:0046936">
    <property type="term" value="F:2'-deoxyadenosine deaminase activity"/>
    <property type="evidence" value="ECO:0007669"/>
    <property type="project" value="RHEA"/>
</dbReference>
<dbReference type="GO" id="GO:0004000">
    <property type="term" value="F:adenosine deaminase activity"/>
    <property type="evidence" value="ECO:0007669"/>
    <property type="project" value="UniProtKB-UniRule"/>
</dbReference>
<dbReference type="GO" id="GO:0008270">
    <property type="term" value="F:zinc ion binding"/>
    <property type="evidence" value="ECO:0007669"/>
    <property type="project" value="UniProtKB-UniRule"/>
</dbReference>
<dbReference type="GO" id="GO:0006154">
    <property type="term" value="P:adenosine catabolic process"/>
    <property type="evidence" value="ECO:0007669"/>
    <property type="project" value="TreeGrafter"/>
</dbReference>
<dbReference type="GO" id="GO:0043103">
    <property type="term" value="P:hypoxanthine salvage"/>
    <property type="evidence" value="ECO:0007669"/>
    <property type="project" value="TreeGrafter"/>
</dbReference>
<dbReference type="GO" id="GO:0046103">
    <property type="term" value="P:inosine biosynthetic process"/>
    <property type="evidence" value="ECO:0007669"/>
    <property type="project" value="TreeGrafter"/>
</dbReference>
<dbReference type="GO" id="GO:0009117">
    <property type="term" value="P:nucleotide metabolic process"/>
    <property type="evidence" value="ECO:0007669"/>
    <property type="project" value="UniProtKB-KW"/>
</dbReference>
<dbReference type="GO" id="GO:0009168">
    <property type="term" value="P:purine ribonucleoside monophosphate biosynthetic process"/>
    <property type="evidence" value="ECO:0007669"/>
    <property type="project" value="UniProtKB-UniRule"/>
</dbReference>
<dbReference type="CDD" id="cd01320">
    <property type="entry name" value="ADA"/>
    <property type="match status" value="1"/>
</dbReference>
<dbReference type="Gene3D" id="3.20.20.140">
    <property type="entry name" value="Metal-dependent hydrolases"/>
    <property type="match status" value="1"/>
</dbReference>
<dbReference type="HAMAP" id="MF_00540">
    <property type="entry name" value="A_deaminase"/>
    <property type="match status" value="1"/>
</dbReference>
<dbReference type="InterPro" id="IPR028893">
    <property type="entry name" value="A_deaminase"/>
</dbReference>
<dbReference type="InterPro" id="IPR001365">
    <property type="entry name" value="A_deaminase_dom"/>
</dbReference>
<dbReference type="InterPro" id="IPR006330">
    <property type="entry name" value="Ado/ade_deaminase"/>
</dbReference>
<dbReference type="InterPro" id="IPR032466">
    <property type="entry name" value="Metal_Hydrolase"/>
</dbReference>
<dbReference type="NCBIfam" id="TIGR01430">
    <property type="entry name" value="aden_deam"/>
    <property type="match status" value="1"/>
</dbReference>
<dbReference type="PANTHER" id="PTHR11409">
    <property type="entry name" value="ADENOSINE DEAMINASE"/>
    <property type="match status" value="1"/>
</dbReference>
<dbReference type="PANTHER" id="PTHR11409:SF43">
    <property type="entry name" value="ADENOSINE DEAMINASE"/>
    <property type="match status" value="1"/>
</dbReference>
<dbReference type="Pfam" id="PF00962">
    <property type="entry name" value="A_deaminase"/>
    <property type="match status" value="1"/>
</dbReference>
<dbReference type="SUPFAM" id="SSF51556">
    <property type="entry name" value="Metallo-dependent hydrolases"/>
    <property type="match status" value="1"/>
</dbReference>
<protein>
    <recommendedName>
        <fullName evidence="1">Adenosine deaminase</fullName>
        <ecNumber evidence="1">3.5.4.4</ecNumber>
    </recommendedName>
    <alternativeName>
        <fullName evidence="1">Adenosine aminohydrolase</fullName>
    </alternativeName>
</protein>
<accession>Q9CIR9</accession>
<reference key="1">
    <citation type="journal article" date="2001" name="Genome Res.">
        <title>The complete genome sequence of the lactic acid bacterium Lactococcus lactis ssp. lactis IL1403.</title>
        <authorList>
            <person name="Bolotin A."/>
            <person name="Wincker P."/>
            <person name="Mauger S."/>
            <person name="Jaillon O."/>
            <person name="Malarme K."/>
            <person name="Weissenbach J."/>
            <person name="Ehrlich S.D."/>
            <person name="Sorokin A."/>
        </authorList>
    </citation>
    <scope>NUCLEOTIDE SEQUENCE [LARGE SCALE GENOMIC DNA]</scope>
    <source>
        <strain>IL1403</strain>
    </source>
</reference>
<name>ADD_LACLA</name>
<sequence>MKKKREKLVLKSEIIAQMPKVELHCHLDGSLSLSVIKELAKNAGIHMTMSDEEILEKAQAPENTKNLLEYLQRFDFVLPLLQTYKNLELAAYDVVRQAANDNIKYIEIRFAPSQHLLENLTLEEAVEAVIAGLSRAENDFDIRANALVCGLKQEPIQKLQKLLPLFDKIPDEHLVGFDMAGDELNYPQEKFVDLIHDIKIKGVNVTLHAGECPACEKNILDSIAMGASRIGHGIMTKNLSEAEQKMMIEKQIVLEMAPTSNFQTKAVTELAQYPFKELYDKGIHVTLNTDNRMVSATNLSKEYEKISAWYPDFSLSDFEKINHYAIDGAFIGQEEKEELHQRFTKEYKKISE</sequence>
<comment type="function">
    <text evidence="1">Catalyzes the hydrolytic deamination of adenosine and 2-deoxyadenosine.</text>
</comment>
<comment type="catalytic activity">
    <reaction evidence="1">
        <text>adenosine + H2O + H(+) = inosine + NH4(+)</text>
        <dbReference type="Rhea" id="RHEA:24408"/>
        <dbReference type="ChEBI" id="CHEBI:15377"/>
        <dbReference type="ChEBI" id="CHEBI:15378"/>
        <dbReference type="ChEBI" id="CHEBI:16335"/>
        <dbReference type="ChEBI" id="CHEBI:17596"/>
        <dbReference type="ChEBI" id="CHEBI:28938"/>
        <dbReference type="EC" id="3.5.4.4"/>
    </reaction>
    <physiologicalReaction direction="left-to-right" evidence="1">
        <dbReference type="Rhea" id="RHEA:24409"/>
    </physiologicalReaction>
</comment>
<comment type="catalytic activity">
    <reaction evidence="1">
        <text>2'-deoxyadenosine + H2O + H(+) = 2'-deoxyinosine + NH4(+)</text>
        <dbReference type="Rhea" id="RHEA:28190"/>
        <dbReference type="ChEBI" id="CHEBI:15377"/>
        <dbReference type="ChEBI" id="CHEBI:15378"/>
        <dbReference type="ChEBI" id="CHEBI:17256"/>
        <dbReference type="ChEBI" id="CHEBI:28938"/>
        <dbReference type="ChEBI" id="CHEBI:28997"/>
        <dbReference type="EC" id="3.5.4.4"/>
    </reaction>
    <physiologicalReaction direction="left-to-right" evidence="1">
        <dbReference type="Rhea" id="RHEA:28191"/>
    </physiologicalReaction>
</comment>
<comment type="cofactor">
    <cofactor evidence="1">
        <name>Zn(2+)</name>
        <dbReference type="ChEBI" id="CHEBI:29105"/>
    </cofactor>
    <text evidence="1">Binds 1 zinc ion per subunit.</text>
</comment>
<comment type="similarity">
    <text evidence="1">Belongs to the metallo-dependent hydrolases superfamily. Adenosine and AMP deaminases family. Adenosine deaminase subfamily.</text>
</comment>
<keyword id="KW-0378">Hydrolase</keyword>
<keyword id="KW-0479">Metal-binding</keyword>
<keyword id="KW-0546">Nucleotide metabolism</keyword>
<keyword id="KW-1185">Reference proteome</keyword>
<keyword id="KW-0862">Zinc</keyword>
<gene>
    <name evidence="1" type="primary">add</name>
    <name type="ordered locus">LL0287</name>
    <name type="ORF">L87453</name>
</gene>
<proteinExistence type="inferred from homology"/>
<organism>
    <name type="scientific">Lactococcus lactis subsp. lactis (strain IL1403)</name>
    <name type="common">Streptococcus lactis</name>
    <dbReference type="NCBI Taxonomy" id="272623"/>
    <lineage>
        <taxon>Bacteria</taxon>
        <taxon>Bacillati</taxon>
        <taxon>Bacillota</taxon>
        <taxon>Bacilli</taxon>
        <taxon>Lactobacillales</taxon>
        <taxon>Streptococcaceae</taxon>
        <taxon>Lactococcus</taxon>
    </lineage>
</organism>